<comment type="function">
    <text evidence="1">Catalyzes the formation of N(4)-acetylcytidine (ac(4)C) at the wobble position of elongator tRNA(Met), using acetate and ATP as substrates. First activates an acetate ion to form acetyladenylate (Ac-AMP) and then transfers the acetyl group to tRNA to form ac(4)C34.</text>
</comment>
<comment type="catalytic activity">
    <reaction evidence="1">
        <text>cytidine(34) in elongator tRNA(Met) + acetate + ATP = N(4)-acetylcytidine(34) in elongator tRNA(Met) + AMP + diphosphate</text>
        <dbReference type="Rhea" id="RHEA:58144"/>
        <dbReference type="Rhea" id="RHEA-COMP:10693"/>
        <dbReference type="Rhea" id="RHEA-COMP:10694"/>
        <dbReference type="ChEBI" id="CHEBI:30089"/>
        <dbReference type="ChEBI" id="CHEBI:30616"/>
        <dbReference type="ChEBI" id="CHEBI:33019"/>
        <dbReference type="ChEBI" id="CHEBI:74900"/>
        <dbReference type="ChEBI" id="CHEBI:82748"/>
        <dbReference type="ChEBI" id="CHEBI:456215"/>
    </reaction>
</comment>
<comment type="subcellular location">
    <subcellularLocation>
        <location evidence="1">Cytoplasm</location>
    </subcellularLocation>
</comment>
<comment type="similarity">
    <text evidence="1">Belongs to the TmcAL family.</text>
</comment>
<name>TMCAL_STRZP</name>
<evidence type="ECO:0000255" key="1">
    <source>
        <dbReference type="HAMAP-Rule" id="MF_01539"/>
    </source>
</evidence>
<accession>C1CM77</accession>
<protein>
    <recommendedName>
        <fullName evidence="1">tRNA(Met) cytidine acetate ligase</fullName>
        <ecNumber evidence="1">6.3.4.-</ecNumber>
    </recommendedName>
</protein>
<feature type="chain" id="PRO_1000185226" description="tRNA(Met) cytidine acetate ligase">
    <location>
        <begin position="1"/>
        <end position="365"/>
    </location>
</feature>
<feature type="binding site" evidence="1">
    <location>
        <begin position="7"/>
        <end position="20"/>
    </location>
    <ligand>
        <name>ATP</name>
        <dbReference type="ChEBI" id="CHEBI:30616"/>
    </ligand>
</feature>
<feature type="binding site" evidence="1">
    <location>
        <position position="96"/>
    </location>
    <ligand>
        <name>ATP</name>
        <dbReference type="ChEBI" id="CHEBI:30616"/>
    </ligand>
</feature>
<feature type="binding site" evidence="1">
    <location>
        <position position="152"/>
    </location>
    <ligand>
        <name>ATP</name>
        <dbReference type="ChEBI" id="CHEBI:30616"/>
    </ligand>
</feature>
<feature type="binding site" evidence="1">
    <location>
        <position position="175"/>
    </location>
    <ligand>
        <name>ATP</name>
        <dbReference type="ChEBI" id="CHEBI:30616"/>
    </ligand>
</feature>
<proteinExistence type="inferred from homology"/>
<keyword id="KW-0067">ATP-binding</keyword>
<keyword id="KW-0963">Cytoplasm</keyword>
<keyword id="KW-0436">Ligase</keyword>
<keyword id="KW-0547">Nucleotide-binding</keyword>
<keyword id="KW-0694">RNA-binding</keyword>
<keyword id="KW-0819">tRNA processing</keyword>
<keyword id="KW-0820">tRNA-binding</keyword>
<dbReference type="EC" id="6.3.4.-" evidence="1"/>
<dbReference type="EMBL" id="CP000920">
    <property type="protein sequence ID" value="ACO21501.1"/>
    <property type="molecule type" value="Genomic_DNA"/>
</dbReference>
<dbReference type="RefSeq" id="WP_000156331.1">
    <property type="nucleotide sequence ID" value="NC_012467.1"/>
</dbReference>
<dbReference type="SMR" id="C1CM77"/>
<dbReference type="KEGG" id="spp:SPP_1759"/>
<dbReference type="HOGENOM" id="CLU_038915_0_2_9"/>
<dbReference type="GO" id="GO:0005737">
    <property type="term" value="C:cytoplasm"/>
    <property type="evidence" value="ECO:0007669"/>
    <property type="project" value="UniProtKB-SubCell"/>
</dbReference>
<dbReference type="GO" id="GO:0005524">
    <property type="term" value="F:ATP binding"/>
    <property type="evidence" value="ECO:0007669"/>
    <property type="project" value="UniProtKB-KW"/>
</dbReference>
<dbReference type="GO" id="GO:0016879">
    <property type="term" value="F:ligase activity, forming carbon-nitrogen bonds"/>
    <property type="evidence" value="ECO:0007669"/>
    <property type="project" value="UniProtKB-UniRule"/>
</dbReference>
<dbReference type="GO" id="GO:0000049">
    <property type="term" value="F:tRNA binding"/>
    <property type="evidence" value="ECO:0007669"/>
    <property type="project" value="UniProtKB-KW"/>
</dbReference>
<dbReference type="GO" id="GO:0006400">
    <property type="term" value="P:tRNA modification"/>
    <property type="evidence" value="ECO:0007669"/>
    <property type="project" value="UniProtKB-UniRule"/>
</dbReference>
<dbReference type="Gene3D" id="3.40.50.620">
    <property type="entry name" value="HUPs"/>
    <property type="match status" value="1"/>
</dbReference>
<dbReference type="HAMAP" id="MF_01539">
    <property type="entry name" value="TmcAL"/>
    <property type="match status" value="1"/>
</dbReference>
<dbReference type="InterPro" id="IPR014729">
    <property type="entry name" value="Rossmann-like_a/b/a_fold"/>
</dbReference>
<dbReference type="InterPro" id="IPR008513">
    <property type="entry name" value="tRNA(Met)_cyd_acetate_ligase"/>
</dbReference>
<dbReference type="NCBIfam" id="NF010191">
    <property type="entry name" value="PRK13670.1"/>
    <property type="match status" value="1"/>
</dbReference>
<dbReference type="PANTHER" id="PTHR37825">
    <property type="entry name" value="TRNA(MET) CYTIDINE ACETATE LIGASE"/>
    <property type="match status" value="1"/>
</dbReference>
<dbReference type="PANTHER" id="PTHR37825:SF1">
    <property type="entry name" value="TRNA(MET) CYTIDINE ACETATE LIGASE"/>
    <property type="match status" value="1"/>
</dbReference>
<dbReference type="Pfam" id="PF05636">
    <property type="entry name" value="HIGH_NTase1"/>
    <property type="match status" value="1"/>
</dbReference>
<dbReference type="SUPFAM" id="SSF52374">
    <property type="entry name" value="Nucleotidylyl transferase"/>
    <property type="match status" value="1"/>
</dbReference>
<reference key="1">
    <citation type="journal article" date="2010" name="Genome Biol.">
        <title>Structure and dynamics of the pan-genome of Streptococcus pneumoniae and closely related species.</title>
        <authorList>
            <person name="Donati C."/>
            <person name="Hiller N.L."/>
            <person name="Tettelin H."/>
            <person name="Muzzi A."/>
            <person name="Croucher N.J."/>
            <person name="Angiuoli S.V."/>
            <person name="Oggioni M."/>
            <person name="Dunning Hotopp J.C."/>
            <person name="Hu F.Z."/>
            <person name="Riley D.R."/>
            <person name="Covacci A."/>
            <person name="Mitchell T.J."/>
            <person name="Bentley S.D."/>
            <person name="Kilian M."/>
            <person name="Ehrlich G.D."/>
            <person name="Rappuoli R."/>
            <person name="Moxon E.R."/>
            <person name="Masignani V."/>
        </authorList>
    </citation>
    <scope>NUCLEOTIDE SEQUENCE [LARGE SCALE GENOMIC DNA]</scope>
    <source>
        <strain>P1031</strain>
    </source>
</reference>
<organism>
    <name type="scientific">Streptococcus pneumoniae (strain P1031)</name>
    <dbReference type="NCBI Taxonomy" id="488223"/>
    <lineage>
        <taxon>Bacteria</taxon>
        <taxon>Bacillati</taxon>
        <taxon>Bacillota</taxon>
        <taxon>Bacilli</taxon>
        <taxon>Lactobacillales</taxon>
        <taxon>Streptococcaceae</taxon>
        <taxon>Streptococcus</taxon>
    </lineage>
</organism>
<gene>
    <name evidence="1" type="primary">tmcAL</name>
    <name type="ordered locus">SPP_1759</name>
</gene>
<sequence>MTITGIIAEFNPFHNGHKYLLDQAEGLKIVAMSGNFMQRGEPAIVDKWTRAQMALENGADLVVELPFLVSVQAADFFGQGAVDILDRLGIDSLVFGTEEVLDYQKIADLYTEKGAEMEKFVKNLPDSLSYPQKTQAMWKEFAGLDFSGNTPNHVLALAYAKAVAGRNIKLHPIQRQGAGYHSVNKDVDFASATALRQHQKDQDFLERFMPSVALFEQASKVIWEDYFPLLRYQILSNPDLTTIYQVNQEMAVRIKEAIKTAQSVEELVELVTTKRYTKARVRRLLTYILVQARENVLPEAIHVLGFTEKGRQHLKSLKGQVNLVSRIGKEPWDAMTQKVDQIYQLGKPSIAEQNFGRVPIRIETN</sequence>